<comment type="function">
    <text evidence="1">Catalyzes the initial step of the lipid cycle reactions in the biosynthesis of the cell wall peptidoglycan: transfers peptidoglycan precursor phospho-MurNAc-pentapeptide from UDP-MurNAc-pentapeptide onto the lipid carrier undecaprenyl phosphate, yielding undecaprenyl-pyrophosphoryl-MurNAc-pentapeptide, known as lipid I.</text>
</comment>
<comment type="catalytic activity">
    <reaction evidence="1">
        <text>UDP-N-acetyl-alpha-D-muramoyl-L-alanyl-gamma-D-glutamyl-meso-2,6-diaminopimeloyl-D-alanyl-D-alanine + di-trans,octa-cis-undecaprenyl phosphate = di-trans,octa-cis-undecaprenyl diphospho-N-acetyl-alpha-D-muramoyl-L-alanyl-D-glutamyl-meso-2,6-diaminopimeloyl-D-alanyl-D-alanine + UMP</text>
        <dbReference type="Rhea" id="RHEA:28386"/>
        <dbReference type="ChEBI" id="CHEBI:57865"/>
        <dbReference type="ChEBI" id="CHEBI:60392"/>
        <dbReference type="ChEBI" id="CHEBI:61386"/>
        <dbReference type="ChEBI" id="CHEBI:61387"/>
        <dbReference type="EC" id="2.7.8.13"/>
    </reaction>
</comment>
<comment type="cofactor">
    <cofactor evidence="1">
        <name>Mg(2+)</name>
        <dbReference type="ChEBI" id="CHEBI:18420"/>
    </cofactor>
</comment>
<comment type="pathway">
    <text evidence="1">Cell wall biogenesis; peptidoglycan biosynthesis.</text>
</comment>
<comment type="subcellular location">
    <subcellularLocation>
        <location evidence="1">Cell inner membrane</location>
        <topology evidence="1">Multi-pass membrane protein</topology>
    </subcellularLocation>
</comment>
<comment type="similarity">
    <text evidence="1">Belongs to the glycosyltransferase 4 family. MraY subfamily.</text>
</comment>
<sequence>MLLWLTNFLSQHFHAFRVFNYLTFRSIVSALTALILVLSLSPRLIKYLVSLQVGQMVRNDGPQTHLKKSGTPTMGGVLIIVAIVISVLLWGDLSNRFIWVILLVTVAFSAIGWMDDYRKIIRKNSKGLSARSKYLLQSIIGALAAVYLYFSATTGAETALVIPFLKNVLPNLGLFYIVLAYFVIVGSSNAVNLTDGLDGLALMPTVMIGAALGVFAYTTGNHFFAQYLAIPYIPGAGEVVVFCSALVGAGLGFLWYNTYPAQVFMGDVGSLGLGAALGVTAVVVRQELVYFLMGGIFVAETLSVILQVGYFKLSGGKRIFRMAPLHHHFELKGWPEPKVIVRFWIITFILVLCGLATLKLR</sequence>
<organism>
    <name type="scientific">Coxiella burnetii (strain CbuK_Q154)</name>
    <name type="common">Coxiella burnetii (strain Q154)</name>
    <dbReference type="NCBI Taxonomy" id="434924"/>
    <lineage>
        <taxon>Bacteria</taxon>
        <taxon>Pseudomonadati</taxon>
        <taxon>Pseudomonadota</taxon>
        <taxon>Gammaproteobacteria</taxon>
        <taxon>Legionellales</taxon>
        <taxon>Coxiellaceae</taxon>
        <taxon>Coxiella</taxon>
    </lineage>
</organism>
<proteinExistence type="inferred from homology"/>
<gene>
    <name evidence="1" type="primary">mraY</name>
    <name type="ordered locus">CbuK_1926</name>
</gene>
<accession>B6J5K9</accession>
<protein>
    <recommendedName>
        <fullName evidence="1">Phospho-N-acetylmuramoyl-pentapeptide-transferase</fullName>
        <ecNumber evidence="1">2.7.8.13</ecNumber>
    </recommendedName>
    <alternativeName>
        <fullName evidence="1">UDP-MurNAc-pentapeptide phosphotransferase</fullName>
    </alternativeName>
</protein>
<reference key="1">
    <citation type="journal article" date="2009" name="Infect. Immun.">
        <title>Comparative genomics reveal extensive transposon-mediated genomic plasticity and diversity among potential effector proteins within the genus Coxiella.</title>
        <authorList>
            <person name="Beare P.A."/>
            <person name="Unsworth N."/>
            <person name="Andoh M."/>
            <person name="Voth D.E."/>
            <person name="Omsland A."/>
            <person name="Gilk S.D."/>
            <person name="Williams K.P."/>
            <person name="Sobral B.W."/>
            <person name="Kupko J.J. III"/>
            <person name="Porcella S.F."/>
            <person name="Samuel J.E."/>
            <person name="Heinzen R.A."/>
        </authorList>
    </citation>
    <scope>NUCLEOTIDE SEQUENCE [LARGE SCALE GENOMIC DNA]</scope>
    <source>
        <strain>CbuK_Q154</strain>
    </source>
</reference>
<keyword id="KW-0131">Cell cycle</keyword>
<keyword id="KW-0132">Cell division</keyword>
<keyword id="KW-0997">Cell inner membrane</keyword>
<keyword id="KW-1003">Cell membrane</keyword>
<keyword id="KW-0133">Cell shape</keyword>
<keyword id="KW-0961">Cell wall biogenesis/degradation</keyword>
<keyword id="KW-0460">Magnesium</keyword>
<keyword id="KW-0472">Membrane</keyword>
<keyword id="KW-0479">Metal-binding</keyword>
<keyword id="KW-0573">Peptidoglycan synthesis</keyword>
<keyword id="KW-0808">Transferase</keyword>
<keyword id="KW-0812">Transmembrane</keyword>
<keyword id="KW-1133">Transmembrane helix</keyword>
<evidence type="ECO:0000255" key="1">
    <source>
        <dbReference type="HAMAP-Rule" id="MF_00038"/>
    </source>
</evidence>
<name>MRAY_COXB1</name>
<feature type="chain" id="PRO_1000090615" description="Phospho-N-acetylmuramoyl-pentapeptide-transferase">
    <location>
        <begin position="1"/>
        <end position="361"/>
    </location>
</feature>
<feature type="transmembrane region" description="Helical" evidence="1">
    <location>
        <begin position="18"/>
        <end position="38"/>
    </location>
</feature>
<feature type="transmembrane region" description="Helical" evidence="1">
    <location>
        <begin position="73"/>
        <end position="93"/>
    </location>
</feature>
<feature type="transmembrane region" description="Helical" evidence="1">
    <location>
        <begin position="97"/>
        <end position="117"/>
    </location>
</feature>
<feature type="transmembrane region" description="Helical" evidence="1">
    <location>
        <begin position="135"/>
        <end position="155"/>
    </location>
</feature>
<feature type="transmembrane region" description="Helical" evidence="1">
    <location>
        <begin position="168"/>
        <end position="188"/>
    </location>
</feature>
<feature type="transmembrane region" description="Helical" evidence="1">
    <location>
        <begin position="196"/>
        <end position="216"/>
    </location>
</feature>
<feature type="transmembrane region" description="Helical" evidence="1">
    <location>
        <begin position="235"/>
        <end position="255"/>
    </location>
</feature>
<feature type="transmembrane region" description="Helical" evidence="1">
    <location>
        <begin position="263"/>
        <end position="283"/>
    </location>
</feature>
<feature type="transmembrane region" description="Helical" evidence="1">
    <location>
        <begin position="288"/>
        <end position="308"/>
    </location>
</feature>
<feature type="transmembrane region" description="Helical" evidence="1">
    <location>
        <begin position="338"/>
        <end position="358"/>
    </location>
</feature>
<dbReference type="EC" id="2.7.8.13" evidence="1"/>
<dbReference type="EMBL" id="CP001020">
    <property type="protein sequence ID" value="ACJ21035.1"/>
    <property type="molecule type" value="Genomic_DNA"/>
</dbReference>
<dbReference type="RefSeq" id="WP_005769458.1">
    <property type="nucleotide sequence ID" value="NC_011528.1"/>
</dbReference>
<dbReference type="SMR" id="B6J5K9"/>
<dbReference type="KEGG" id="cbc:CbuK_1926"/>
<dbReference type="HOGENOM" id="CLU_023982_0_0_6"/>
<dbReference type="UniPathway" id="UPA00219"/>
<dbReference type="GO" id="GO:0005886">
    <property type="term" value="C:plasma membrane"/>
    <property type="evidence" value="ECO:0007669"/>
    <property type="project" value="UniProtKB-SubCell"/>
</dbReference>
<dbReference type="GO" id="GO:0046872">
    <property type="term" value="F:metal ion binding"/>
    <property type="evidence" value="ECO:0007669"/>
    <property type="project" value="UniProtKB-KW"/>
</dbReference>
<dbReference type="GO" id="GO:0008963">
    <property type="term" value="F:phospho-N-acetylmuramoyl-pentapeptide-transferase activity"/>
    <property type="evidence" value="ECO:0007669"/>
    <property type="project" value="UniProtKB-UniRule"/>
</dbReference>
<dbReference type="GO" id="GO:0051992">
    <property type="term" value="F:UDP-N-acetylmuramoyl-L-alanyl-D-glutamyl-meso-2,6-diaminopimelyl-D-alanyl-D-alanine:undecaprenyl-phosphate transferase activity"/>
    <property type="evidence" value="ECO:0007669"/>
    <property type="project" value="RHEA"/>
</dbReference>
<dbReference type="GO" id="GO:0051301">
    <property type="term" value="P:cell division"/>
    <property type="evidence" value="ECO:0007669"/>
    <property type="project" value="UniProtKB-KW"/>
</dbReference>
<dbReference type="GO" id="GO:0071555">
    <property type="term" value="P:cell wall organization"/>
    <property type="evidence" value="ECO:0007669"/>
    <property type="project" value="UniProtKB-KW"/>
</dbReference>
<dbReference type="GO" id="GO:0009252">
    <property type="term" value="P:peptidoglycan biosynthetic process"/>
    <property type="evidence" value="ECO:0007669"/>
    <property type="project" value="UniProtKB-UniRule"/>
</dbReference>
<dbReference type="GO" id="GO:0008360">
    <property type="term" value="P:regulation of cell shape"/>
    <property type="evidence" value="ECO:0007669"/>
    <property type="project" value="UniProtKB-KW"/>
</dbReference>
<dbReference type="CDD" id="cd06852">
    <property type="entry name" value="GT_MraY"/>
    <property type="match status" value="1"/>
</dbReference>
<dbReference type="HAMAP" id="MF_00038">
    <property type="entry name" value="MraY"/>
    <property type="match status" value="1"/>
</dbReference>
<dbReference type="InterPro" id="IPR000715">
    <property type="entry name" value="Glycosyl_transferase_4"/>
</dbReference>
<dbReference type="InterPro" id="IPR003524">
    <property type="entry name" value="PNAcMuramoyl-5peptid_Trfase"/>
</dbReference>
<dbReference type="InterPro" id="IPR018480">
    <property type="entry name" value="PNAcMuramoyl-5peptid_Trfase_CS"/>
</dbReference>
<dbReference type="NCBIfam" id="TIGR00445">
    <property type="entry name" value="mraY"/>
    <property type="match status" value="1"/>
</dbReference>
<dbReference type="PANTHER" id="PTHR22926">
    <property type="entry name" value="PHOSPHO-N-ACETYLMURAMOYL-PENTAPEPTIDE-TRANSFERASE"/>
    <property type="match status" value="1"/>
</dbReference>
<dbReference type="PANTHER" id="PTHR22926:SF5">
    <property type="entry name" value="PHOSPHO-N-ACETYLMURAMOYL-PENTAPEPTIDE-TRANSFERASE HOMOLOG"/>
    <property type="match status" value="1"/>
</dbReference>
<dbReference type="Pfam" id="PF00953">
    <property type="entry name" value="Glycos_transf_4"/>
    <property type="match status" value="1"/>
</dbReference>
<dbReference type="Pfam" id="PF10555">
    <property type="entry name" value="MraY_sig1"/>
    <property type="match status" value="1"/>
</dbReference>
<dbReference type="PROSITE" id="PS01347">
    <property type="entry name" value="MRAY_1"/>
    <property type="match status" value="1"/>
</dbReference>
<dbReference type="PROSITE" id="PS01348">
    <property type="entry name" value="MRAY_2"/>
    <property type="match status" value="1"/>
</dbReference>